<protein>
    <recommendedName>
        <fullName evidence="1">Probable manganese-dependent inorganic pyrophosphatase</fullName>
        <ecNumber evidence="1">3.6.1.1</ecNumber>
    </recommendedName>
    <alternativeName>
        <fullName evidence="1">Pyrophosphate phospho-hydrolase</fullName>
        <shortName evidence="1">PPase</shortName>
    </alternativeName>
</protein>
<feature type="chain" id="PRO_1000012309" description="Probable manganese-dependent inorganic pyrophosphatase">
    <location>
        <begin position="1"/>
        <end position="309"/>
    </location>
</feature>
<feature type="binding site" evidence="1">
    <location>
        <position position="9"/>
    </location>
    <ligand>
        <name>Mn(2+)</name>
        <dbReference type="ChEBI" id="CHEBI:29035"/>
        <label>1</label>
    </ligand>
</feature>
<feature type="binding site" evidence="1">
    <location>
        <position position="13"/>
    </location>
    <ligand>
        <name>Mn(2+)</name>
        <dbReference type="ChEBI" id="CHEBI:29035"/>
        <label>1</label>
    </ligand>
</feature>
<feature type="binding site" evidence="1">
    <location>
        <position position="15"/>
    </location>
    <ligand>
        <name>Mn(2+)</name>
        <dbReference type="ChEBI" id="CHEBI:29035"/>
        <label>2</label>
    </ligand>
</feature>
<feature type="binding site" evidence="1">
    <location>
        <position position="75"/>
    </location>
    <ligand>
        <name>Mn(2+)</name>
        <dbReference type="ChEBI" id="CHEBI:29035"/>
        <label>1</label>
    </ligand>
</feature>
<feature type="binding site" evidence="1">
    <location>
        <position position="75"/>
    </location>
    <ligand>
        <name>Mn(2+)</name>
        <dbReference type="ChEBI" id="CHEBI:29035"/>
        <label>2</label>
    </ligand>
</feature>
<feature type="binding site" evidence="1">
    <location>
        <position position="97"/>
    </location>
    <ligand>
        <name>Mn(2+)</name>
        <dbReference type="ChEBI" id="CHEBI:29035"/>
        <label>2</label>
    </ligand>
</feature>
<feature type="binding site" evidence="1">
    <location>
        <position position="149"/>
    </location>
    <ligand>
        <name>Mn(2+)</name>
        <dbReference type="ChEBI" id="CHEBI:29035"/>
        <label>2</label>
    </ligand>
</feature>
<sequence>MEKVLVFGHKNPDTDAICSAIAYAELKKELGMNAEPVRLGEISGETQFALDYFKVEGPRFVETVANEVDNVILVDHNERQQSANDIESVRVLEVIDHHRIANFETSDPIYYRCEPVGCTATILNKMYKENGVTIRKEVAGLMLSAIISDSLLFKSPTCTEQDVAAARELAEIAGVDADKYGLEMLKAGADLSGKTMEQLISLDAKEFQMGNAKVEIAQVNAVDTNDVLVHQAELEKVISAVVEEKGLDLFLFVVTDILTNDSVGLAIGKAANIVEKAYNVSLENNTATLKGVVSRKKQIVPVLTEAFQA</sequence>
<reference key="1">
    <citation type="journal article" date="2006" name="J. Bacteriol.">
        <title>Pathogenomic sequence analysis of Bacillus cereus and Bacillus thuringiensis isolates closely related to Bacillus anthracis.</title>
        <authorList>
            <person name="Han C.S."/>
            <person name="Xie G."/>
            <person name="Challacombe J.F."/>
            <person name="Altherr M.R."/>
            <person name="Bhotika S.S."/>
            <person name="Bruce D."/>
            <person name="Campbell C.S."/>
            <person name="Campbell M.L."/>
            <person name="Chen J."/>
            <person name="Chertkov O."/>
            <person name="Cleland C."/>
            <person name="Dimitrijevic M."/>
            <person name="Doggett N.A."/>
            <person name="Fawcett J.J."/>
            <person name="Glavina T."/>
            <person name="Goodwin L.A."/>
            <person name="Hill K.K."/>
            <person name="Hitchcock P."/>
            <person name="Jackson P.J."/>
            <person name="Keim P."/>
            <person name="Kewalramani A.R."/>
            <person name="Longmire J."/>
            <person name="Lucas S."/>
            <person name="Malfatti S."/>
            <person name="McMurry K."/>
            <person name="Meincke L.J."/>
            <person name="Misra M."/>
            <person name="Moseman B.L."/>
            <person name="Mundt M."/>
            <person name="Munk A.C."/>
            <person name="Okinaka R.T."/>
            <person name="Parson-Quintana B."/>
            <person name="Reilly L.P."/>
            <person name="Richardson P."/>
            <person name="Robinson D.L."/>
            <person name="Rubin E."/>
            <person name="Saunders E."/>
            <person name="Tapia R."/>
            <person name="Tesmer J.G."/>
            <person name="Thayer N."/>
            <person name="Thompson L.S."/>
            <person name="Tice H."/>
            <person name="Ticknor L.O."/>
            <person name="Wills P.L."/>
            <person name="Brettin T.S."/>
            <person name="Gilna P."/>
        </authorList>
    </citation>
    <scope>NUCLEOTIDE SEQUENCE [LARGE SCALE GENOMIC DNA]</scope>
    <source>
        <strain>97-27</strain>
    </source>
</reference>
<dbReference type="EC" id="3.6.1.1" evidence="1"/>
<dbReference type="EMBL" id="AE017355">
    <property type="protein sequence ID" value="AAT61311.1"/>
    <property type="molecule type" value="Genomic_DNA"/>
</dbReference>
<dbReference type="RefSeq" id="WP_000416849.1">
    <property type="nucleotide sequence ID" value="NC_005957.1"/>
</dbReference>
<dbReference type="RefSeq" id="YP_036910.1">
    <property type="nucleotide sequence ID" value="NC_005957.1"/>
</dbReference>
<dbReference type="SMR" id="Q6HHR6"/>
<dbReference type="GeneID" id="45022660"/>
<dbReference type="KEGG" id="btk:BT9727_2585"/>
<dbReference type="PATRIC" id="fig|281309.8.peg.2736"/>
<dbReference type="HOGENOM" id="CLU_025243_0_1_9"/>
<dbReference type="Proteomes" id="UP000001301">
    <property type="component" value="Chromosome"/>
</dbReference>
<dbReference type="GO" id="GO:0005737">
    <property type="term" value="C:cytoplasm"/>
    <property type="evidence" value="ECO:0007669"/>
    <property type="project" value="UniProtKB-SubCell"/>
</dbReference>
<dbReference type="GO" id="GO:0004427">
    <property type="term" value="F:inorganic diphosphate phosphatase activity"/>
    <property type="evidence" value="ECO:0007669"/>
    <property type="project" value="UniProtKB-UniRule"/>
</dbReference>
<dbReference type="GO" id="GO:0030145">
    <property type="term" value="F:manganese ion binding"/>
    <property type="evidence" value="ECO:0007669"/>
    <property type="project" value="UniProtKB-UniRule"/>
</dbReference>
<dbReference type="FunFam" id="3.10.310.20:FF:000001">
    <property type="entry name" value="Probable manganese-dependent inorganic pyrophosphatase"/>
    <property type="match status" value="1"/>
</dbReference>
<dbReference type="FunFam" id="3.90.1640.10:FF:000001">
    <property type="entry name" value="Probable manganese-dependent inorganic pyrophosphatase"/>
    <property type="match status" value="1"/>
</dbReference>
<dbReference type="Gene3D" id="3.10.310.20">
    <property type="entry name" value="DHHA2 domain"/>
    <property type="match status" value="1"/>
</dbReference>
<dbReference type="Gene3D" id="3.90.1640.10">
    <property type="entry name" value="inorganic pyrophosphatase (n-terminal core)"/>
    <property type="match status" value="1"/>
</dbReference>
<dbReference type="HAMAP" id="MF_00207">
    <property type="entry name" value="PPase_C"/>
    <property type="match status" value="1"/>
</dbReference>
<dbReference type="InterPro" id="IPR001667">
    <property type="entry name" value="DDH_dom"/>
</dbReference>
<dbReference type="InterPro" id="IPR038763">
    <property type="entry name" value="DHH_sf"/>
</dbReference>
<dbReference type="InterPro" id="IPR004097">
    <property type="entry name" value="DHHA2"/>
</dbReference>
<dbReference type="InterPro" id="IPR038222">
    <property type="entry name" value="DHHA2_dom_sf"/>
</dbReference>
<dbReference type="InterPro" id="IPR022934">
    <property type="entry name" value="Mn-dep_inorganic_PyrPase"/>
</dbReference>
<dbReference type="NCBIfam" id="NF003877">
    <property type="entry name" value="PRK05427.1"/>
    <property type="match status" value="1"/>
</dbReference>
<dbReference type="PANTHER" id="PTHR12112">
    <property type="entry name" value="BNIP - RELATED"/>
    <property type="match status" value="1"/>
</dbReference>
<dbReference type="PANTHER" id="PTHR12112:SF22">
    <property type="entry name" value="MANGANESE-DEPENDENT INORGANIC PYROPHOSPHATASE-RELATED"/>
    <property type="match status" value="1"/>
</dbReference>
<dbReference type="Pfam" id="PF01368">
    <property type="entry name" value="DHH"/>
    <property type="match status" value="1"/>
</dbReference>
<dbReference type="Pfam" id="PF02833">
    <property type="entry name" value="DHHA2"/>
    <property type="match status" value="1"/>
</dbReference>
<dbReference type="SMART" id="SM01131">
    <property type="entry name" value="DHHA2"/>
    <property type="match status" value="1"/>
</dbReference>
<dbReference type="SUPFAM" id="SSF64182">
    <property type="entry name" value="DHH phosphoesterases"/>
    <property type="match status" value="1"/>
</dbReference>
<name>PPAC_BACHK</name>
<keyword id="KW-0963">Cytoplasm</keyword>
<keyword id="KW-0378">Hydrolase</keyword>
<keyword id="KW-0464">Manganese</keyword>
<keyword id="KW-0479">Metal-binding</keyword>
<proteinExistence type="inferred from homology"/>
<organism>
    <name type="scientific">Bacillus thuringiensis subsp. konkukian (strain 97-27)</name>
    <dbReference type="NCBI Taxonomy" id="281309"/>
    <lineage>
        <taxon>Bacteria</taxon>
        <taxon>Bacillati</taxon>
        <taxon>Bacillota</taxon>
        <taxon>Bacilli</taxon>
        <taxon>Bacillales</taxon>
        <taxon>Bacillaceae</taxon>
        <taxon>Bacillus</taxon>
        <taxon>Bacillus cereus group</taxon>
    </lineage>
</organism>
<comment type="catalytic activity">
    <reaction evidence="1">
        <text>diphosphate + H2O = 2 phosphate + H(+)</text>
        <dbReference type="Rhea" id="RHEA:24576"/>
        <dbReference type="ChEBI" id="CHEBI:15377"/>
        <dbReference type="ChEBI" id="CHEBI:15378"/>
        <dbReference type="ChEBI" id="CHEBI:33019"/>
        <dbReference type="ChEBI" id="CHEBI:43474"/>
        <dbReference type="EC" id="3.6.1.1"/>
    </reaction>
</comment>
<comment type="cofactor">
    <cofactor evidence="1">
        <name>Mn(2+)</name>
        <dbReference type="ChEBI" id="CHEBI:29035"/>
    </cofactor>
    <text evidence="1">Binds 2 manganese ions per subunit.</text>
</comment>
<comment type="subcellular location">
    <subcellularLocation>
        <location evidence="1">Cytoplasm</location>
    </subcellularLocation>
</comment>
<comment type="similarity">
    <text evidence="1">Belongs to the PPase class C family.</text>
</comment>
<evidence type="ECO:0000255" key="1">
    <source>
        <dbReference type="HAMAP-Rule" id="MF_00207"/>
    </source>
</evidence>
<gene>
    <name evidence="1" type="primary">ppaC</name>
    <name type="ordered locus">BT9727_2585</name>
</gene>
<accession>Q6HHR6</accession>